<comment type="catalytic activity">
    <reaction>
        <text>Preferential cleavage: Arg-|-Xaa, Lys-|-Xaa.</text>
        <dbReference type="EC" id="3.4.21.4"/>
    </reaction>
</comment>
<comment type="cofactor">
    <cofactor evidence="1">
        <name>Ca(2+)</name>
        <dbReference type="ChEBI" id="CHEBI:29108"/>
    </cofactor>
    <text evidence="1">Binds 1 Ca(2+) ion per subunit.</text>
</comment>
<comment type="subcellular location">
    <subcellularLocation>
        <location>Secreted</location>
        <location>Extracellular space</location>
    </subcellularLocation>
</comment>
<comment type="tissue specificity">
    <text>High levels are seen in the pancreas while lower levels are found in the liver, spleen and thymus.</text>
</comment>
<comment type="similarity">
    <text evidence="2">Belongs to the peptidase S1 family.</text>
</comment>
<name>TRY3_CHICK</name>
<protein>
    <recommendedName>
        <fullName>Trypsin II-P29</fullName>
        <ecNumber>3.4.21.4</ecNumber>
    </recommendedName>
</protein>
<evidence type="ECO:0000250" key="1"/>
<evidence type="ECO:0000255" key="2">
    <source>
        <dbReference type="PROSITE-ProRule" id="PRU00274"/>
    </source>
</evidence>
<keyword id="KW-0106">Calcium</keyword>
<keyword id="KW-0222">Digestion</keyword>
<keyword id="KW-1015">Disulfide bond</keyword>
<keyword id="KW-0378">Hydrolase</keyword>
<keyword id="KW-0479">Metal-binding</keyword>
<keyword id="KW-0645">Protease</keyword>
<keyword id="KW-1185">Reference proteome</keyword>
<keyword id="KW-0964">Secreted</keyword>
<keyword id="KW-0720">Serine protease</keyword>
<keyword id="KW-0732">Signal</keyword>
<keyword id="KW-0865">Zymogen</keyword>
<dbReference type="EC" id="3.4.21.4"/>
<dbReference type="EMBL" id="U15157">
    <property type="protein sequence ID" value="AAA79914.1"/>
    <property type="molecule type" value="mRNA"/>
</dbReference>
<dbReference type="PIR" id="S55066">
    <property type="entry name" value="S55066"/>
</dbReference>
<dbReference type="RefSeq" id="NP_990715.1">
    <property type="nucleotide sequence ID" value="NM_205384.2"/>
</dbReference>
<dbReference type="SMR" id="Q90629"/>
<dbReference type="FunCoup" id="Q90629">
    <property type="interactions" value="45"/>
</dbReference>
<dbReference type="STRING" id="9031.ENSGALP00000055103"/>
<dbReference type="PaxDb" id="9031-ENSGALP00000029849"/>
<dbReference type="Ensembl" id="ENSGALT00010057322.1">
    <property type="protein sequence ID" value="ENSGALP00010034844.1"/>
    <property type="gene ID" value="ENSGALG00010023541.1"/>
</dbReference>
<dbReference type="GeneID" id="396344"/>
<dbReference type="KEGG" id="gga:396344"/>
<dbReference type="CTD" id="5645"/>
<dbReference type="VEuPathDB" id="HostDB:geneid_396344"/>
<dbReference type="eggNOG" id="KOG3627">
    <property type="taxonomic scope" value="Eukaryota"/>
</dbReference>
<dbReference type="GeneTree" id="ENSGT01050000244883"/>
<dbReference type="HOGENOM" id="CLU_006842_13_1_1"/>
<dbReference type="InParanoid" id="Q90629"/>
<dbReference type="OMA" id="HCYKSTI"/>
<dbReference type="OrthoDB" id="10059102at2759"/>
<dbReference type="PRO" id="PR:Q90629"/>
<dbReference type="Proteomes" id="UP000000539">
    <property type="component" value="Chromosome 1"/>
</dbReference>
<dbReference type="GO" id="GO:0005615">
    <property type="term" value="C:extracellular space"/>
    <property type="evidence" value="ECO:0000318"/>
    <property type="project" value="GO_Central"/>
</dbReference>
<dbReference type="GO" id="GO:0046872">
    <property type="term" value="F:metal ion binding"/>
    <property type="evidence" value="ECO:0007669"/>
    <property type="project" value="UniProtKB-KW"/>
</dbReference>
<dbReference type="GO" id="GO:0004252">
    <property type="term" value="F:serine-type endopeptidase activity"/>
    <property type="evidence" value="ECO:0000318"/>
    <property type="project" value="GO_Central"/>
</dbReference>
<dbReference type="GO" id="GO:0007586">
    <property type="term" value="P:digestion"/>
    <property type="evidence" value="ECO:0007669"/>
    <property type="project" value="UniProtKB-KW"/>
</dbReference>
<dbReference type="GO" id="GO:0006508">
    <property type="term" value="P:proteolysis"/>
    <property type="evidence" value="ECO:0007669"/>
    <property type="project" value="UniProtKB-KW"/>
</dbReference>
<dbReference type="CDD" id="cd00190">
    <property type="entry name" value="Tryp_SPc"/>
    <property type="match status" value="1"/>
</dbReference>
<dbReference type="FunFam" id="2.40.10.10:FF:000008">
    <property type="entry name" value="Cationic trypsin"/>
    <property type="match status" value="1"/>
</dbReference>
<dbReference type="FunFam" id="2.40.10.10:FF:000122">
    <property type="entry name" value="Chymotrypsin-like elastase family member 1"/>
    <property type="match status" value="1"/>
</dbReference>
<dbReference type="Gene3D" id="2.40.10.10">
    <property type="entry name" value="Trypsin-like serine proteases"/>
    <property type="match status" value="2"/>
</dbReference>
<dbReference type="InterPro" id="IPR009003">
    <property type="entry name" value="Peptidase_S1_PA"/>
</dbReference>
<dbReference type="InterPro" id="IPR043504">
    <property type="entry name" value="Peptidase_S1_PA_chymotrypsin"/>
</dbReference>
<dbReference type="InterPro" id="IPR001314">
    <property type="entry name" value="Peptidase_S1A"/>
</dbReference>
<dbReference type="InterPro" id="IPR050127">
    <property type="entry name" value="Serine_Proteases_S1"/>
</dbReference>
<dbReference type="InterPro" id="IPR001254">
    <property type="entry name" value="Trypsin_dom"/>
</dbReference>
<dbReference type="InterPro" id="IPR018114">
    <property type="entry name" value="TRYPSIN_HIS"/>
</dbReference>
<dbReference type="InterPro" id="IPR033116">
    <property type="entry name" value="TRYPSIN_SER"/>
</dbReference>
<dbReference type="PANTHER" id="PTHR24264:SF57">
    <property type="entry name" value="TRYPSIN-2"/>
    <property type="match status" value="1"/>
</dbReference>
<dbReference type="PANTHER" id="PTHR24264">
    <property type="entry name" value="TRYPSIN-RELATED"/>
    <property type="match status" value="1"/>
</dbReference>
<dbReference type="Pfam" id="PF00089">
    <property type="entry name" value="Trypsin"/>
    <property type="match status" value="1"/>
</dbReference>
<dbReference type="PRINTS" id="PR00722">
    <property type="entry name" value="CHYMOTRYPSIN"/>
</dbReference>
<dbReference type="SMART" id="SM00020">
    <property type="entry name" value="Tryp_SPc"/>
    <property type="match status" value="1"/>
</dbReference>
<dbReference type="SUPFAM" id="SSF50494">
    <property type="entry name" value="Trypsin-like serine proteases"/>
    <property type="match status" value="1"/>
</dbReference>
<dbReference type="PROSITE" id="PS50240">
    <property type="entry name" value="TRYPSIN_DOM"/>
    <property type="match status" value="1"/>
</dbReference>
<dbReference type="PROSITE" id="PS00134">
    <property type="entry name" value="TRYPSIN_HIS"/>
    <property type="match status" value="1"/>
</dbReference>
<dbReference type="PROSITE" id="PS00135">
    <property type="entry name" value="TRYPSIN_SER"/>
    <property type="match status" value="1"/>
</dbReference>
<reference key="1">
    <citation type="journal article" date="1995" name="Biochem. J.">
        <title>Isolation and characterization of the chicken trypsinogen gene family.</title>
        <authorList>
            <person name="Wang K."/>
            <person name="Gan L."/>
            <person name="Lee I."/>
            <person name="Hood L.E."/>
        </authorList>
    </citation>
    <scope>NUCLEOTIDE SEQUENCE [MRNA]</scope>
    <source>
        <tissue>Pancreas</tissue>
    </source>
</reference>
<proteinExistence type="evidence at transcript level"/>
<sequence length="248" mass="26622">MKFLFLILSCLGAAVAFPGGADDDKIVGGYTCPEHSVPYQVSLNSGYHFCGGSLINSQWVLSAAHCYKSRIQVRLGEYNIDVQEDSEVVRSSSVIIRHPKYSSITLNNDIMLIKLASAVEYSADIQPIALPSSCAKAGTECLISGWGNTLSNGYNYPELLQCLNAPILSDQECQEAYPGDITSNMICVGFLEGGKDSCQGDSGGPVVCNGELQGIVSWGIGCALKGYPGVYTKVCNYVDWIQETIAAY</sequence>
<feature type="signal peptide" evidence="1">
    <location>
        <begin position="1"/>
        <end position="16"/>
    </location>
</feature>
<feature type="propeptide" id="PRO_0000028223" description="Activation peptide" evidence="1">
    <location>
        <begin position="17"/>
        <end position="25"/>
    </location>
</feature>
<feature type="chain" id="PRO_0000028224" description="Trypsin II-P29">
    <location>
        <begin position="26"/>
        <end position="248"/>
    </location>
</feature>
<feature type="domain" description="Peptidase S1" evidence="2">
    <location>
        <begin position="26"/>
        <end position="246"/>
    </location>
</feature>
<feature type="active site" description="Charge relay system" evidence="1">
    <location>
        <position position="65"/>
    </location>
</feature>
<feature type="active site" description="Charge relay system" evidence="1">
    <location>
        <position position="109"/>
    </location>
</feature>
<feature type="active site" description="Charge relay system" evidence="1">
    <location>
        <position position="202"/>
    </location>
</feature>
<feature type="binding site" evidence="1">
    <location>
        <position position="77"/>
    </location>
    <ligand>
        <name>Ca(2+)</name>
        <dbReference type="ChEBI" id="CHEBI:29108"/>
    </ligand>
</feature>
<feature type="binding site" evidence="1">
    <location>
        <position position="79"/>
    </location>
    <ligand>
        <name>Ca(2+)</name>
        <dbReference type="ChEBI" id="CHEBI:29108"/>
    </ligand>
</feature>
<feature type="binding site" evidence="1">
    <location>
        <position position="82"/>
    </location>
    <ligand>
        <name>Ca(2+)</name>
        <dbReference type="ChEBI" id="CHEBI:29108"/>
    </ligand>
</feature>
<feature type="binding site" evidence="1">
    <location>
        <position position="87"/>
    </location>
    <ligand>
        <name>Ca(2+)</name>
        <dbReference type="ChEBI" id="CHEBI:29108"/>
    </ligand>
</feature>
<feature type="site" description="Required for specificity" evidence="1">
    <location>
        <position position="196"/>
    </location>
</feature>
<feature type="disulfide bond" evidence="2">
    <location>
        <begin position="32"/>
        <end position="162"/>
    </location>
</feature>
<feature type="disulfide bond" evidence="2">
    <location>
        <begin position="50"/>
        <end position="66"/>
    </location>
</feature>
<feature type="disulfide bond" evidence="2">
    <location>
        <begin position="134"/>
        <end position="235"/>
    </location>
</feature>
<feature type="disulfide bond" evidence="2">
    <location>
        <begin position="141"/>
        <end position="208"/>
    </location>
</feature>
<feature type="disulfide bond" evidence="2">
    <location>
        <begin position="173"/>
        <end position="187"/>
    </location>
</feature>
<feature type="disulfide bond" evidence="2">
    <location>
        <begin position="198"/>
        <end position="222"/>
    </location>
</feature>
<organism>
    <name type="scientific">Gallus gallus</name>
    <name type="common">Chicken</name>
    <dbReference type="NCBI Taxonomy" id="9031"/>
    <lineage>
        <taxon>Eukaryota</taxon>
        <taxon>Metazoa</taxon>
        <taxon>Chordata</taxon>
        <taxon>Craniata</taxon>
        <taxon>Vertebrata</taxon>
        <taxon>Euteleostomi</taxon>
        <taxon>Archelosauria</taxon>
        <taxon>Archosauria</taxon>
        <taxon>Dinosauria</taxon>
        <taxon>Saurischia</taxon>
        <taxon>Theropoda</taxon>
        <taxon>Coelurosauria</taxon>
        <taxon>Aves</taxon>
        <taxon>Neognathae</taxon>
        <taxon>Galloanserae</taxon>
        <taxon>Galliformes</taxon>
        <taxon>Phasianidae</taxon>
        <taxon>Phasianinae</taxon>
        <taxon>Gallus</taxon>
    </lineage>
</organism>
<accession>Q90629</accession>